<reference key="1">
    <citation type="journal article" date="2004" name="Proc. Natl. Acad. Sci. U.S.A.">
        <title>The louse-borne human pathogen Bartonella quintana is a genomic derivative of the zoonotic agent Bartonella henselae.</title>
        <authorList>
            <person name="Alsmark U.C.M."/>
            <person name="Frank A.C."/>
            <person name="Karlberg E.O."/>
            <person name="Legault B.-A."/>
            <person name="Ardell D.H."/>
            <person name="Canbaeck B."/>
            <person name="Eriksson A.-S."/>
            <person name="Naeslund A.K."/>
            <person name="Handley S.A."/>
            <person name="Huvet M."/>
            <person name="La Scola B."/>
            <person name="Holmberg M."/>
            <person name="Andersson S.G.E."/>
        </authorList>
    </citation>
    <scope>NUCLEOTIDE SEQUENCE [LARGE SCALE GENOMIC DNA]</scope>
    <source>
        <strain>ATCC 49882 / DSM 28221 / CCUG 30454 / Houston 1</strain>
    </source>
</reference>
<organism>
    <name type="scientific">Bartonella henselae (strain ATCC 49882 / DSM 28221 / CCUG 30454 / Houston 1)</name>
    <name type="common">Rochalimaea henselae</name>
    <dbReference type="NCBI Taxonomy" id="283166"/>
    <lineage>
        <taxon>Bacteria</taxon>
        <taxon>Pseudomonadati</taxon>
        <taxon>Pseudomonadota</taxon>
        <taxon>Alphaproteobacteria</taxon>
        <taxon>Hyphomicrobiales</taxon>
        <taxon>Bartonellaceae</taxon>
        <taxon>Bartonella</taxon>
    </lineage>
</organism>
<sequence>MRSGVIAQKLGMTRIYNDAGEHVPVTVLRLENCQVVAQRTVEKNGYTAVQLGVGFAKVKNTSQALRGHFAKASVEPKAKIAEFRVSPDNLLDIGTEITAEHFVPGQRVDVTGTTIGKGFAGVMKRHNFGGHRASHGNSITHRAHGSTGQCQDPGKVFKGKKMAGHMGQVRVTTQNIEVVSTDVERGLILVRGAVSGSKGAWILVRDAIKKPLPDNAPKPAGIRQLAKEKTEMVAPVTETSEVEGAE</sequence>
<dbReference type="EMBL" id="BX897699">
    <property type="protein sequence ID" value="CAF27842.1"/>
    <property type="molecule type" value="Genomic_DNA"/>
</dbReference>
<dbReference type="RefSeq" id="WP_011180914.1">
    <property type="nucleotide sequence ID" value="NZ_LRIJ02000001.1"/>
</dbReference>
<dbReference type="SMR" id="Q6G2W5"/>
<dbReference type="PaxDb" id="283166-BH10510"/>
<dbReference type="EnsemblBacteria" id="CAF27842">
    <property type="protein sequence ID" value="CAF27842"/>
    <property type="gene ID" value="BH10510"/>
</dbReference>
<dbReference type="GeneID" id="92985263"/>
<dbReference type="KEGG" id="bhe:BH10510"/>
<dbReference type="eggNOG" id="COG0087">
    <property type="taxonomic scope" value="Bacteria"/>
</dbReference>
<dbReference type="OrthoDB" id="9806135at2"/>
<dbReference type="Proteomes" id="UP000000421">
    <property type="component" value="Chromosome"/>
</dbReference>
<dbReference type="GO" id="GO:0022625">
    <property type="term" value="C:cytosolic large ribosomal subunit"/>
    <property type="evidence" value="ECO:0007669"/>
    <property type="project" value="TreeGrafter"/>
</dbReference>
<dbReference type="GO" id="GO:0019843">
    <property type="term" value="F:rRNA binding"/>
    <property type="evidence" value="ECO:0007669"/>
    <property type="project" value="UniProtKB-UniRule"/>
</dbReference>
<dbReference type="GO" id="GO:0003735">
    <property type="term" value="F:structural constituent of ribosome"/>
    <property type="evidence" value="ECO:0007669"/>
    <property type="project" value="InterPro"/>
</dbReference>
<dbReference type="GO" id="GO:0006412">
    <property type="term" value="P:translation"/>
    <property type="evidence" value="ECO:0007669"/>
    <property type="project" value="UniProtKB-UniRule"/>
</dbReference>
<dbReference type="FunFam" id="2.40.30.10:FF:000004">
    <property type="entry name" value="50S ribosomal protein L3"/>
    <property type="match status" value="1"/>
</dbReference>
<dbReference type="FunFam" id="3.30.160.810:FF:000001">
    <property type="entry name" value="50S ribosomal protein L3"/>
    <property type="match status" value="1"/>
</dbReference>
<dbReference type="Gene3D" id="3.30.160.810">
    <property type="match status" value="1"/>
</dbReference>
<dbReference type="Gene3D" id="2.40.30.10">
    <property type="entry name" value="Translation factors"/>
    <property type="match status" value="1"/>
</dbReference>
<dbReference type="HAMAP" id="MF_01325_B">
    <property type="entry name" value="Ribosomal_uL3_B"/>
    <property type="match status" value="1"/>
</dbReference>
<dbReference type="InterPro" id="IPR000597">
    <property type="entry name" value="Ribosomal_uL3"/>
</dbReference>
<dbReference type="InterPro" id="IPR019927">
    <property type="entry name" value="Ribosomal_uL3_bac/org-type"/>
</dbReference>
<dbReference type="InterPro" id="IPR019926">
    <property type="entry name" value="Ribosomal_uL3_CS"/>
</dbReference>
<dbReference type="InterPro" id="IPR009000">
    <property type="entry name" value="Transl_B-barrel_sf"/>
</dbReference>
<dbReference type="NCBIfam" id="TIGR03625">
    <property type="entry name" value="L3_bact"/>
    <property type="match status" value="1"/>
</dbReference>
<dbReference type="PANTHER" id="PTHR11229">
    <property type="entry name" value="50S RIBOSOMAL PROTEIN L3"/>
    <property type="match status" value="1"/>
</dbReference>
<dbReference type="PANTHER" id="PTHR11229:SF16">
    <property type="entry name" value="LARGE RIBOSOMAL SUBUNIT PROTEIN UL3C"/>
    <property type="match status" value="1"/>
</dbReference>
<dbReference type="Pfam" id="PF00297">
    <property type="entry name" value="Ribosomal_L3"/>
    <property type="match status" value="1"/>
</dbReference>
<dbReference type="SUPFAM" id="SSF50447">
    <property type="entry name" value="Translation proteins"/>
    <property type="match status" value="1"/>
</dbReference>
<dbReference type="PROSITE" id="PS00474">
    <property type="entry name" value="RIBOSOMAL_L3"/>
    <property type="match status" value="1"/>
</dbReference>
<accession>Q6G2W5</accession>
<proteinExistence type="inferred from homology"/>
<keyword id="KW-0488">Methylation</keyword>
<keyword id="KW-0687">Ribonucleoprotein</keyword>
<keyword id="KW-0689">Ribosomal protein</keyword>
<keyword id="KW-0694">RNA-binding</keyword>
<keyword id="KW-0699">rRNA-binding</keyword>
<gene>
    <name evidence="1" type="primary">rplC</name>
    <name type="ordered locus">BH10510</name>
</gene>
<protein>
    <recommendedName>
        <fullName evidence="1">Large ribosomal subunit protein uL3</fullName>
    </recommendedName>
    <alternativeName>
        <fullName evidence="2">50S ribosomal protein L3</fullName>
    </alternativeName>
</protein>
<name>RL3_BARHE</name>
<feature type="chain" id="PRO_0000241317" description="Large ribosomal subunit protein uL3">
    <location>
        <begin position="1"/>
        <end position="246"/>
    </location>
</feature>
<feature type="modified residue" description="N5-methylglutamine" evidence="1">
    <location>
        <position position="151"/>
    </location>
</feature>
<evidence type="ECO:0000255" key="1">
    <source>
        <dbReference type="HAMAP-Rule" id="MF_01325"/>
    </source>
</evidence>
<evidence type="ECO:0000305" key="2"/>
<comment type="function">
    <text evidence="1">One of the primary rRNA binding proteins, it binds directly near the 3'-end of the 23S rRNA, where it nucleates assembly of the 50S subunit.</text>
</comment>
<comment type="subunit">
    <text evidence="1">Part of the 50S ribosomal subunit. Forms a cluster with proteins L14 and L19.</text>
</comment>
<comment type="PTM">
    <text evidence="1">Methylated by PrmB.</text>
</comment>
<comment type="similarity">
    <text evidence="1">Belongs to the universal ribosomal protein uL3 family.</text>
</comment>